<comment type="function">
    <text evidence="1">IF-3 binds to the 30S ribosomal subunit and shifts the equilibrium between 70S ribosomes and their 50S and 30S subunits in favor of the free subunits, thus enhancing the availability of 30S subunits on which protein synthesis initiation begins.</text>
</comment>
<comment type="subunit">
    <text evidence="1">Monomer.</text>
</comment>
<comment type="subcellular location">
    <subcellularLocation>
        <location evidence="1">Cytoplasm</location>
    </subcellularLocation>
</comment>
<comment type="similarity">
    <text evidence="1">Belongs to the IF-3 family.</text>
</comment>
<feature type="chain" id="PRO_0000177502" description="Translation initiation factor IF-3">
    <location>
        <begin position="1"/>
        <end position="186"/>
    </location>
</feature>
<name>IF3_CHLCV</name>
<evidence type="ECO:0000255" key="1">
    <source>
        <dbReference type="HAMAP-Rule" id="MF_00080"/>
    </source>
</evidence>
<gene>
    <name evidence="1" type="primary">infC</name>
    <name type="ordered locus">CCA_00771</name>
</gene>
<dbReference type="EMBL" id="AE015925">
    <property type="protein sequence ID" value="AAP05512.1"/>
    <property type="molecule type" value="Genomic_DNA"/>
</dbReference>
<dbReference type="RefSeq" id="WP_011006726.1">
    <property type="nucleotide sequence ID" value="NC_003361.3"/>
</dbReference>
<dbReference type="SMR" id="Q822B2"/>
<dbReference type="STRING" id="227941.CCA_00771"/>
<dbReference type="KEGG" id="cca:CCA_00771"/>
<dbReference type="eggNOG" id="COG0290">
    <property type="taxonomic scope" value="Bacteria"/>
</dbReference>
<dbReference type="HOGENOM" id="CLU_054919_3_2_0"/>
<dbReference type="OrthoDB" id="9806014at2"/>
<dbReference type="Proteomes" id="UP000002193">
    <property type="component" value="Chromosome"/>
</dbReference>
<dbReference type="GO" id="GO:0005829">
    <property type="term" value="C:cytosol"/>
    <property type="evidence" value="ECO:0007669"/>
    <property type="project" value="TreeGrafter"/>
</dbReference>
<dbReference type="GO" id="GO:0016020">
    <property type="term" value="C:membrane"/>
    <property type="evidence" value="ECO:0007669"/>
    <property type="project" value="TreeGrafter"/>
</dbReference>
<dbReference type="GO" id="GO:0043022">
    <property type="term" value="F:ribosome binding"/>
    <property type="evidence" value="ECO:0007669"/>
    <property type="project" value="TreeGrafter"/>
</dbReference>
<dbReference type="GO" id="GO:0003743">
    <property type="term" value="F:translation initiation factor activity"/>
    <property type="evidence" value="ECO:0007669"/>
    <property type="project" value="UniProtKB-UniRule"/>
</dbReference>
<dbReference type="GO" id="GO:0032790">
    <property type="term" value="P:ribosome disassembly"/>
    <property type="evidence" value="ECO:0007669"/>
    <property type="project" value="TreeGrafter"/>
</dbReference>
<dbReference type="FunFam" id="3.10.20.80:FF:000001">
    <property type="entry name" value="Translation initiation factor IF-3"/>
    <property type="match status" value="1"/>
</dbReference>
<dbReference type="FunFam" id="3.30.110.10:FF:000001">
    <property type="entry name" value="Translation initiation factor IF-3"/>
    <property type="match status" value="1"/>
</dbReference>
<dbReference type="Gene3D" id="3.30.110.10">
    <property type="entry name" value="Translation initiation factor 3 (IF-3), C-terminal domain"/>
    <property type="match status" value="1"/>
</dbReference>
<dbReference type="Gene3D" id="3.10.20.80">
    <property type="entry name" value="Translation initiation factor 3 (IF-3), N-terminal domain"/>
    <property type="match status" value="1"/>
</dbReference>
<dbReference type="HAMAP" id="MF_00080">
    <property type="entry name" value="IF_3"/>
    <property type="match status" value="1"/>
</dbReference>
<dbReference type="InterPro" id="IPR036788">
    <property type="entry name" value="T_IF-3_C_sf"/>
</dbReference>
<dbReference type="InterPro" id="IPR036787">
    <property type="entry name" value="T_IF-3_N_sf"/>
</dbReference>
<dbReference type="InterPro" id="IPR019813">
    <property type="entry name" value="Translation_initiation_fac3_CS"/>
</dbReference>
<dbReference type="InterPro" id="IPR001288">
    <property type="entry name" value="Translation_initiation_fac_3"/>
</dbReference>
<dbReference type="InterPro" id="IPR019815">
    <property type="entry name" value="Translation_initiation_fac_3_C"/>
</dbReference>
<dbReference type="InterPro" id="IPR019814">
    <property type="entry name" value="Translation_initiation_fac_3_N"/>
</dbReference>
<dbReference type="NCBIfam" id="TIGR00168">
    <property type="entry name" value="infC"/>
    <property type="match status" value="1"/>
</dbReference>
<dbReference type="PANTHER" id="PTHR10938">
    <property type="entry name" value="TRANSLATION INITIATION FACTOR IF-3"/>
    <property type="match status" value="1"/>
</dbReference>
<dbReference type="PANTHER" id="PTHR10938:SF0">
    <property type="entry name" value="TRANSLATION INITIATION FACTOR IF-3, MITOCHONDRIAL"/>
    <property type="match status" value="1"/>
</dbReference>
<dbReference type="Pfam" id="PF00707">
    <property type="entry name" value="IF3_C"/>
    <property type="match status" value="1"/>
</dbReference>
<dbReference type="Pfam" id="PF05198">
    <property type="entry name" value="IF3_N"/>
    <property type="match status" value="1"/>
</dbReference>
<dbReference type="SUPFAM" id="SSF55200">
    <property type="entry name" value="Translation initiation factor IF3, C-terminal domain"/>
    <property type="match status" value="1"/>
</dbReference>
<dbReference type="SUPFAM" id="SSF54364">
    <property type="entry name" value="Translation initiation factor IF3, N-terminal domain"/>
    <property type="match status" value="1"/>
</dbReference>
<dbReference type="PROSITE" id="PS00938">
    <property type="entry name" value="IF3"/>
    <property type="match status" value="1"/>
</dbReference>
<reference key="1">
    <citation type="journal article" date="2003" name="Nucleic Acids Res.">
        <title>Genome sequence of Chlamydophila caviae (Chlamydia psittaci GPIC): examining the role of niche-specific genes in the evolution of the Chlamydiaceae.</title>
        <authorList>
            <person name="Read T.D."/>
            <person name="Myers G.S.A."/>
            <person name="Brunham R.C."/>
            <person name="Nelson W.C."/>
            <person name="Paulsen I.T."/>
            <person name="Heidelberg J.F."/>
            <person name="Holtzapple E.K."/>
            <person name="Khouri H.M."/>
            <person name="Federova N.B."/>
            <person name="Carty H.A."/>
            <person name="Umayam L.A."/>
            <person name="Haft D.H."/>
            <person name="Peterson J.D."/>
            <person name="Beanan M.J."/>
            <person name="White O."/>
            <person name="Salzberg S.L."/>
            <person name="Hsia R.-C."/>
            <person name="McClarty G."/>
            <person name="Rank R.G."/>
            <person name="Bavoil P.M."/>
            <person name="Fraser C.M."/>
        </authorList>
    </citation>
    <scope>NUCLEOTIDE SEQUENCE [LARGE SCALE GENOMIC DNA]</scope>
    <source>
        <strain>ATCC VR-813 / DSM 19441 / 03DC25 / GPIC</strain>
    </source>
</reference>
<accession>Q822B2</accession>
<proteinExistence type="inferred from homology"/>
<organism>
    <name type="scientific">Chlamydia caviae (strain ATCC VR-813 / DSM 19441 / 03DC25 / GPIC)</name>
    <name type="common">Chlamydophila caviae</name>
    <dbReference type="NCBI Taxonomy" id="227941"/>
    <lineage>
        <taxon>Bacteria</taxon>
        <taxon>Pseudomonadati</taxon>
        <taxon>Chlamydiota</taxon>
        <taxon>Chlamydiia</taxon>
        <taxon>Chlamydiales</taxon>
        <taxon>Chlamydiaceae</taxon>
        <taxon>Chlamydia/Chlamydophila group</taxon>
        <taxon>Chlamydia</taxon>
    </lineage>
</organism>
<protein>
    <recommendedName>
        <fullName evidence="1">Translation initiation factor IF-3</fullName>
    </recommendedName>
</protein>
<sequence>MALNLKINRQIRAPKVRLIGSSGEQLGILNTKDALDLAREADLDLVEVASNSEPPVCKIMDYGKYRYDLTKKEKDSKKAQHQVRIKEVKLKPNIDEGDFSTKLKQARAFIEKGNKVKITCMFRGRELAYPEHGHRVVQKMSQGLEDIGFMESEPKLNGRSLICVMAPGTVKTKKKQDKINAQDEKQ</sequence>
<keyword id="KW-0963">Cytoplasm</keyword>
<keyword id="KW-0396">Initiation factor</keyword>
<keyword id="KW-0648">Protein biosynthesis</keyword>